<accession>Q47IT5</accession>
<comment type="function">
    <text evidence="1">Converts GTP to 7,8-dihydroneopterin triphosphate.</text>
</comment>
<comment type="catalytic activity">
    <reaction evidence="1">
        <text>GTP + H2O = 7,8-dihydroneopterin 3'-triphosphate + formate + H(+)</text>
        <dbReference type="Rhea" id="RHEA:17473"/>
        <dbReference type="ChEBI" id="CHEBI:15377"/>
        <dbReference type="ChEBI" id="CHEBI:15378"/>
        <dbReference type="ChEBI" id="CHEBI:15740"/>
        <dbReference type="ChEBI" id="CHEBI:37565"/>
        <dbReference type="ChEBI" id="CHEBI:58462"/>
        <dbReference type="EC" id="3.5.4.16"/>
    </reaction>
</comment>
<comment type="pathway">
    <text evidence="1">Cofactor biosynthesis; 7,8-dihydroneopterin triphosphate biosynthesis; 7,8-dihydroneopterin triphosphate from GTP: step 1/1.</text>
</comment>
<comment type="similarity">
    <text evidence="1">Belongs to the GTP cyclohydrolase IV family.</text>
</comment>
<keyword id="KW-0378">Hydrolase</keyword>
<reference key="1">
    <citation type="journal article" date="2009" name="BMC Genomics">
        <title>Metabolic analysis of the soil microbe Dechloromonas aromatica str. RCB: indications of a surprisingly complex life-style and cryptic anaerobic pathways for aromatic degradation.</title>
        <authorList>
            <person name="Salinero K.K."/>
            <person name="Keller K."/>
            <person name="Feil W.S."/>
            <person name="Feil H."/>
            <person name="Trong S."/>
            <person name="Di Bartolo G."/>
            <person name="Lapidus A."/>
        </authorList>
    </citation>
    <scope>NUCLEOTIDE SEQUENCE [LARGE SCALE GENOMIC DNA]</scope>
    <source>
        <strain>RCB</strain>
    </source>
</reference>
<dbReference type="EC" id="3.5.4.16" evidence="1"/>
<dbReference type="EMBL" id="CP000089">
    <property type="protein sequence ID" value="AAZ45246.1"/>
    <property type="molecule type" value="Genomic_DNA"/>
</dbReference>
<dbReference type="SMR" id="Q47IT5"/>
<dbReference type="STRING" id="159087.Daro_0489"/>
<dbReference type="KEGG" id="dar:Daro_0489"/>
<dbReference type="eggNOG" id="COG1469">
    <property type="taxonomic scope" value="Bacteria"/>
</dbReference>
<dbReference type="HOGENOM" id="CLU_062816_1_1_4"/>
<dbReference type="OrthoDB" id="9774824at2"/>
<dbReference type="UniPathway" id="UPA00848">
    <property type="reaction ID" value="UER00151"/>
</dbReference>
<dbReference type="GO" id="GO:0003934">
    <property type="term" value="F:GTP cyclohydrolase I activity"/>
    <property type="evidence" value="ECO:0007669"/>
    <property type="project" value="UniProtKB-UniRule"/>
</dbReference>
<dbReference type="GO" id="GO:0046654">
    <property type="term" value="P:tetrahydrofolate biosynthetic process"/>
    <property type="evidence" value="ECO:0007669"/>
    <property type="project" value="UniProtKB-UniRule"/>
</dbReference>
<dbReference type="Gene3D" id="3.10.270.10">
    <property type="entry name" value="Urate Oxidase"/>
    <property type="match status" value="1"/>
</dbReference>
<dbReference type="HAMAP" id="MF_01527_B">
    <property type="entry name" value="GTP_cyclohydrol_B"/>
    <property type="match status" value="1"/>
</dbReference>
<dbReference type="InterPro" id="IPR022838">
    <property type="entry name" value="GTP_cyclohydrolase_FolE2"/>
</dbReference>
<dbReference type="InterPro" id="IPR003801">
    <property type="entry name" value="GTP_cyclohydrolase_FolE2/MptA"/>
</dbReference>
<dbReference type="NCBIfam" id="NF010200">
    <property type="entry name" value="PRK13674.1-1"/>
    <property type="match status" value="1"/>
</dbReference>
<dbReference type="PANTHER" id="PTHR36445">
    <property type="entry name" value="GTP CYCLOHYDROLASE MPTA"/>
    <property type="match status" value="1"/>
</dbReference>
<dbReference type="PANTHER" id="PTHR36445:SF1">
    <property type="entry name" value="GTP CYCLOHYDROLASE MPTA"/>
    <property type="match status" value="1"/>
</dbReference>
<dbReference type="Pfam" id="PF02649">
    <property type="entry name" value="GCHY-1"/>
    <property type="match status" value="1"/>
</dbReference>
<proteinExistence type="inferred from homology"/>
<name>GCH41_DECAR</name>
<evidence type="ECO:0000255" key="1">
    <source>
        <dbReference type="HAMAP-Rule" id="MF_01527"/>
    </source>
</evidence>
<feature type="chain" id="PRO_0000289488" description="GTP cyclohydrolase FolE2 1">
    <location>
        <begin position="1"/>
        <end position="266"/>
    </location>
</feature>
<feature type="site" description="May be catalytically important" evidence="1">
    <location>
        <position position="154"/>
    </location>
</feature>
<organism>
    <name type="scientific">Dechloromonas aromatica (strain RCB)</name>
    <dbReference type="NCBI Taxonomy" id="159087"/>
    <lineage>
        <taxon>Bacteria</taxon>
        <taxon>Pseudomonadati</taxon>
        <taxon>Pseudomonadota</taxon>
        <taxon>Betaproteobacteria</taxon>
        <taxon>Rhodocyclales</taxon>
        <taxon>Azonexaceae</taxon>
        <taxon>Dechloromonas</taxon>
    </lineage>
</organism>
<sequence length="266" mass="29695">MNAPENIFLPDVQAAADTRRLAIQSVGVKGLRYPLQLENAAGELTSTVATFAMSVGLPPEVKGTHMSRFVELLEARTGPLTQVGLLRMMADMLLRLDASSGRIELAFPYFIRKMAPVSGVESLLDYDATLIVDQRAWESATLTLRVVAPVTSLCPCSKKISDYGAHNQRSHITLEARLRSPMSIEDLVRIAEEEASCEVFGLLKRPDEKWVTERAYDNPKFVEDLVRDIALRLMNEPRIAEWKVASENFESIHNHSAYAELYGCNE</sequence>
<gene>
    <name evidence="1" type="primary">folE2-1</name>
    <name type="ordered locus">Daro_0489</name>
</gene>
<protein>
    <recommendedName>
        <fullName evidence="1">GTP cyclohydrolase FolE2 1</fullName>
        <ecNumber evidence="1">3.5.4.16</ecNumber>
    </recommendedName>
</protein>